<comment type="function">
    <text>Phototransformation of protochlorophyllide (Pchlide) to chlorophyllide (Chlide).</text>
</comment>
<comment type="catalytic activity">
    <reaction>
        <text>chlorophyllide a + NADP(+) = protochlorophyllide a + NADPH + H(+)</text>
        <dbReference type="Rhea" id="RHEA:11132"/>
        <dbReference type="ChEBI" id="CHEBI:15378"/>
        <dbReference type="ChEBI" id="CHEBI:57783"/>
        <dbReference type="ChEBI" id="CHEBI:58349"/>
        <dbReference type="ChEBI" id="CHEBI:83348"/>
        <dbReference type="ChEBI" id="CHEBI:83350"/>
        <dbReference type="EC" id="1.3.1.33"/>
    </reaction>
</comment>
<comment type="pathway">
    <text>Porphyrin-containing compound metabolism; chlorophyll biosynthesis.</text>
</comment>
<comment type="subcellular location">
    <subcellularLocation>
        <location>Plastid</location>
        <location>Chloroplast</location>
    </subcellularLocation>
</comment>
<comment type="similarity">
    <text evidence="2">Belongs to the short-chain dehydrogenases/reductases (SDR) family. POR subfamily.</text>
</comment>
<protein>
    <recommendedName>
        <fullName>Protochlorophyllide reductase, chloroplastic</fullName>
        <shortName>PCR</shortName>
        <ecNumber>1.3.1.33</ecNumber>
    </recommendedName>
    <alternativeName>
        <fullName>NADPH-protochlorophyllide oxidoreductase</fullName>
        <shortName>POR</shortName>
    </alternativeName>
</protein>
<keyword id="KW-0149">Chlorophyll biosynthesis</keyword>
<keyword id="KW-0150">Chloroplast</keyword>
<keyword id="KW-0521">NADP</keyword>
<keyword id="KW-0560">Oxidoreductase</keyword>
<keyword id="KW-0602">Photosynthesis</keyword>
<keyword id="KW-0934">Plastid</keyword>
<keyword id="KW-0809">Transit peptide</keyword>
<feature type="transit peptide" description="Chloroplast" evidence="1">
    <location>
        <begin position="1"/>
        <end status="unknown"/>
    </location>
</feature>
<feature type="chain" id="PRO_0000023292" description="Protochlorophyllide reductase, chloroplastic">
    <location>
        <begin status="unknown"/>
        <end position="398"/>
    </location>
</feature>
<gene>
    <name type="primary">POR1</name>
</gene>
<dbReference type="EC" id="1.3.1.33"/>
<dbReference type="EMBL" id="AF207691">
    <property type="protein sequence ID" value="AAF20949.1"/>
    <property type="molecule type" value="mRNA"/>
</dbReference>
<dbReference type="SMR" id="Q9SDT1"/>
<dbReference type="OMA" id="FRFKREH"/>
<dbReference type="BRENDA" id="1.3.1.33">
    <property type="organism ID" value="1841"/>
</dbReference>
<dbReference type="UniPathway" id="UPA00668"/>
<dbReference type="GO" id="GO:0009507">
    <property type="term" value="C:chloroplast"/>
    <property type="evidence" value="ECO:0007669"/>
    <property type="project" value="UniProtKB-SubCell"/>
</dbReference>
<dbReference type="GO" id="GO:0016630">
    <property type="term" value="F:protochlorophyllide reductase activity"/>
    <property type="evidence" value="ECO:0007669"/>
    <property type="project" value="UniProtKB-EC"/>
</dbReference>
<dbReference type="GO" id="GO:0015995">
    <property type="term" value="P:chlorophyll biosynthetic process"/>
    <property type="evidence" value="ECO:0007669"/>
    <property type="project" value="UniProtKB-UniPathway"/>
</dbReference>
<dbReference type="GO" id="GO:0015979">
    <property type="term" value="P:photosynthesis"/>
    <property type="evidence" value="ECO:0007669"/>
    <property type="project" value="UniProtKB-KW"/>
</dbReference>
<dbReference type="CDD" id="cd09810">
    <property type="entry name" value="LPOR_like_SDR_c_like"/>
    <property type="match status" value="1"/>
</dbReference>
<dbReference type="Gene3D" id="3.40.50.720">
    <property type="entry name" value="NAD(P)-binding Rossmann-like Domain"/>
    <property type="match status" value="1"/>
</dbReference>
<dbReference type="InterPro" id="IPR036291">
    <property type="entry name" value="NAD(P)-bd_dom_sf"/>
</dbReference>
<dbReference type="InterPro" id="IPR005979">
    <property type="entry name" value="Prochl_reduct"/>
</dbReference>
<dbReference type="InterPro" id="IPR002347">
    <property type="entry name" value="SDR_fam"/>
</dbReference>
<dbReference type="NCBIfam" id="TIGR01289">
    <property type="entry name" value="LPOR"/>
    <property type="match status" value="1"/>
</dbReference>
<dbReference type="PANTHER" id="PTHR44419:SF19">
    <property type="entry name" value="PROTOCHLOROPHYLLIDE REDUCTASE A, CHLOROPLASTIC"/>
    <property type="match status" value="1"/>
</dbReference>
<dbReference type="PANTHER" id="PTHR44419">
    <property type="entry name" value="PROTOCHLOROPHYLLIDE REDUCTASE C, CHLOROPLASTIC"/>
    <property type="match status" value="1"/>
</dbReference>
<dbReference type="Pfam" id="PF00106">
    <property type="entry name" value="adh_short"/>
    <property type="match status" value="1"/>
</dbReference>
<dbReference type="PRINTS" id="PR00081">
    <property type="entry name" value="GDHRDH"/>
</dbReference>
<dbReference type="SUPFAM" id="SSF51735">
    <property type="entry name" value="NAD(P)-binding Rossmann-fold domains"/>
    <property type="match status" value="1"/>
</dbReference>
<accession>Q9SDT1</accession>
<name>POR_DAUCA</name>
<evidence type="ECO:0000255" key="1"/>
<evidence type="ECO:0000305" key="2"/>
<sequence>MALQAASFLPSSFSINKEGKANVSLKETSLFGVTFSDSLRTDFSSLRTRRGCRQISQTGAIRSQAVATTPSVNRATGEGKKTLRKGSVIITGASSGLGLATAKALAETGKWHVIMACRDFLKAERAAKSAGMPKENYTIMHLDLASLDSVRQFVETFRRSERPLDVLVCNAAVYFPTAKEPTYTADGFELSVGTNHLGHFLLSRLLLDDLNKSDYPSKRLIIVGSITGNTNTLAGNVPPKANLGDLRGLAGGLNGMNSSAMIDGAEFDGAKAYKDSKVCNMLTMQEFHRRYHEETGITFASLYPGCIATTGLFREHIPLFRTLFPPFQKYITKGYVSEAESGKRLAQVVSEPSLTKSGVYWSWNKDSASFENQLSEEASDVEKARKVWEVSEKLVGLA</sequence>
<proteinExistence type="evidence at transcript level"/>
<reference key="1">
    <citation type="journal article" date="1997" name="Plant Cell Physiol.">
        <title>Cloning of photosynthesis-related genes and their expression during somatic embryogenesis in carrot.</title>
        <authorList>
            <person name="Sato K."/>
            <person name="Demura T."/>
            <person name="Fukuda H."/>
        </authorList>
    </citation>
    <scope>NUCLEOTIDE SEQUENCE [MRNA]</scope>
    <source>
        <strain>cv. Kurodagosun</strain>
    </source>
</reference>
<organism>
    <name type="scientific">Daucus carota</name>
    <name type="common">Wild carrot</name>
    <dbReference type="NCBI Taxonomy" id="4039"/>
    <lineage>
        <taxon>Eukaryota</taxon>
        <taxon>Viridiplantae</taxon>
        <taxon>Streptophyta</taxon>
        <taxon>Embryophyta</taxon>
        <taxon>Tracheophyta</taxon>
        <taxon>Spermatophyta</taxon>
        <taxon>Magnoliopsida</taxon>
        <taxon>eudicotyledons</taxon>
        <taxon>Gunneridae</taxon>
        <taxon>Pentapetalae</taxon>
        <taxon>asterids</taxon>
        <taxon>campanulids</taxon>
        <taxon>Apiales</taxon>
        <taxon>Apiaceae</taxon>
        <taxon>Apioideae</taxon>
        <taxon>Scandiceae</taxon>
        <taxon>Daucinae</taxon>
        <taxon>Daucus</taxon>
        <taxon>Daucus sect. Daucus</taxon>
    </lineage>
</organism>